<comment type="catalytic activity">
    <reaction evidence="1">
        <text>D-glucose + ATP = D-glucose 6-phosphate + ADP + H(+)</text>
        <dbReference type="Rhea" id="RHEA:17825"/>
        <dbReference type="ChEBI" id="CHEBI:4167"/>
        <dbReference type="ChEBI" id="CHEBI:15378"/>
        <dbReference type="ChEBI" id="CHEBI:30616"/>
        <dbReference type="ChEBI" id="CHEBI:61548"/>
        <dbReference type="ChEBI" id="CHEBI:456216"/>
        <dbReference type="EC" id="2.7.1.2"/>
    </reaction>
</comment>
<comment type="subcellular location">
    <subcellularLocation>
        <location evidence="1">Cytoplasm</location>
    </subcellularLocation>
</comment>
<comment type="similarity">
    <text evidence="1">Belongs to the bacterial glucokinase family.</text>
</comment>
<proteinExistence type="inferred from homology"/>
<dbReference type="EC" id="2.7.1.2" evidence="1"/>
<dbReference type="EMBL" id="CP000026">
    <property type="protein sequence ID" value="AAV76462.1"/>
    <property type="molecule type" value="Genomic_DNA"/>
</dbReference>
<dbReference type="RefSeq" id="WP_000170380.1">
    <property type="nucleotide sequence ID" value="NC_006511.1"/>
</dbReference>
<dbReference type="SMR" id="Q5PNF2"/>
<dbReference type="KEGG" id="spt:SPA0457"/>
<dbReference type="HOGENOM" id="CLU_042582_1_0_6"/>
<dbReference type="Proteomes" id="UP000008185">
    <property type="component" value="Chromosome"/>
</dbReference>
<dbReference type="GO" id="GO:0005829">
    <property type="term" value="C:cytosol"/>
    <property type="evidence" value="ECO:0007669"/>
    <property type="project" value="TreeGrafter"/>
</dbReference>
<dbReference type="GO" id="GO:0005524">
    <property type="term" value="F:ATP binding"/>
    <property type="evidence" value="ECO:0007669"/>
    <property type="project" value="UniProtKB-UniRule"/>
</dbReference>
<dbReference type="GO" id="GO:0005536">
    <property type="term" value="F:D-glucose binding"/>
    <property type="evidence" value="ECO:0007669"/>
    <property type="project" value="InterPro"/>
</dbReference>
<dbReference type="GO" id="GO:0004340">
    <property type="term" value="F:glucokinase activity"/>
    <property type="evidence" value="ECO:0007669"/>
    <property type="project" value="UniProtKB-UniRule"/>
</dbReference>
<dbReference type="GO" id="GO:0006096">
    <property type="term" value="P:glycolytic process"/>
    <property type="evidence" value="ECO:0007669"/>
    <property type="project" value="UniProtKB-UniRule"/>
</dbReference>
<dbReference type="CDD" id="cd24008">
    <property type="entry name" value="ASKHA_NBD_GLK"/>
    <property type="match status" value="1"/>
</dbReference>
<dbReference type="FunFam" id="3.30.420.40:FF:000045">
    <property type="entry name" value="Glucokinase"/>
    <property type="match status" value="1"/>
</dbReference>
<dbReference type="FunFam" id="3.40.367.20:FF:000002">
    <property type="entry name" value="Glucokinase"/>
    <property type="match status" value="1"/>
</dbReference>
<dbReference type="Gene3D" id="3.30.420.40">
    <property type="match status" value="1"/>
</dbReference>
<dbReference type="Gene3D" id="3.40.367.20">
    <property type="match status" value="1"/>
</dbReference>
<dbReference type="HAMAP" id="MF_00524">
    <property type="entry name" value="Glucokinase"/>
    <property type="match status" value="1"/>
</dbReference>
<dbReference type="InterPro" id="IPR043129">
    <property type="entry name" value="ATPase_NBD"/>
</dbReference>
<dbReference type="InterPro" id="IPR050201">
    <property type="entry name" value="Bacterial_glucokinase"/>
</dbReference>
<dbReference type="InterPro" id="IPR003836">
    <property type="entry name" value="Glucokinase"/>
</dbReference>
<dbReference type="NCBIfam" id="TIGR00749">
    <property type="entry name" value="glk"/>
    <property type="match status" value="1"/>
</dbReference>
<dbReference type="NCBIfam" id="NF001414">
    <property type="entry name" value="PRK00292.1-1"/>
    <property type="match status" value="1"/>
</dbReference>
<dbReference type="NCBIfam" id="NF001416">
    <property type="entry name" value="PRK00292.1-3"/>
    <property type="match status" value="1"/>
</dbReference>
<dbReference type="PANTHER" id="PTHR47690">
    <property type="entry name" value="GLUCOKINASE"/>
    <property type="match status" value="1"/>
</dbReference>
<dbReference type="PANTHER" id="PTHR47690:SF1">
    <property type="entry name" value="GLUCOKINASE"/>
    <property type="match status" value="1"/>
</dbReference>
<dbReference type="Pfam" id="PF02685">
    <property type="entry name" value="Glucokinase"/>
    <property type="match status" value="1"/>
</dbReference>
<dbReference type="SUPFAM" id="SSF53067">
    <property type="entry name" value="Actin-like ATPase domain"/>
    <property type="match status" value="1"/>
</dbReference>
<name>GLK_SALPA</name>
<protein>
    <recommendedName>
        <fullName evidence="1">Glucokinase</fullName>
        <ecNumber evidence="1">2.7.1.2</ecNumber>
    </recommendedName>
    <alternativeName>
        <fullName evidence="1">Glucose kinase</fullName>
    </alternativeName>
</protein>
<feature type="chain" id="PRO_0000268786" description="Glucokinase">
    <location>
        <begin position="1"/>
        <end position="321"/>
    </location>
</feature>
<feature type="binding site" evidence="1">
    <location>
        <begin position="8"/>
        <end position="13"/>
    </location>
    <ligand>
        <name>ATP</name>
        <dbReference type="ChEBI" id="CHEBI:30616"/>
    </ligand>
</feature>
<evidence type="ECO:0000255" key="1">
    <source>
        <dbReference type="HAMAP-Rule" id="MF_00524"/>
    </source>
</evidence>
<organism>
    <name type="scientific">Salmonella paratyphi A (strain ATCC 9150 / SARB42)</name>
    <dbReference type="NCBI Taxonomy" id="295319"/>
    <lineage>
        <taxon>Bacteria</taxon>
        <taxon>Pseudomonadati</taxon>
        <taxon>Pseudomonadota</taxon>
        <taxon>Gammaproteobacteria</taxon>
        <taxon>Enterobacterales</taxon>
        <taxon>Enterobacteriaceae</taxon>
        <taxon>Salmonella</taxon>
    </lineage>
</organism>
<gene>
    <name evidence="1" type="primary">glk</name>
    <name type="ordered locus">SPA0457</name>
</gene>
<accession>Q5PNF2</accession>
<keyword id="KW-0067">ATP-binding</keyword>
<keyword id="KW-0963">Cytoplasm</keyword>
<keyword id="KW-0324">Glycolysis</keyword>
<keyword id="KW-0418">Kinase</keyword>
<keyword id="KW-0547">Nucleotide-binding</keyword>
<keyword id="KW-0808">Transferase</keyword>
<sequence>MTKYALVGDVGGTNARLALCDIASGEISQAKTYSGLDYPSLEAVVRVYLDEHSVSVEDGCIAIACPITGDWVAMTNHTWAFSIAEMKKNLGFSHLEIINDFTAVSMAIPMLKKEHLIQFGGGEPVDGKPIAVYGAGTGLGVAHLVHVDKRWISLPGEGGHVDFAPNSEEEAMILEILRAEIGHVSAERVLSGPGLVNLYRAIVKSDNRLPENLRPKDITERALADSCIDCRRALSLFCVIMGRFGGDLALTMGTFGGVYIAGGIVPRFLEFFKASGFRGGFEDKGRFKDYVHGIPVYLIVHDNPGLLGSGAHLRQTLGHIL</sequence>
<reference key="1">
    <citation type="journal article" date="2004" name="Nat. Genet.">
        <title>Comparison of genome degradation in Paratyphi A and Typhi, human-restricted serovars of Salmonella enterica that cause typhoid.</title>
        <authorList>
            <person name="McClelland M."/>
            <person name="Sanderson K.E."/>
            <person name="Clifton S.W."/>
            <person name="Latreille P."/>
            <person name="Porwollik S."/>
            <person name="Sabo A."/>
            <person name="Meyer R."/>
            <person name="Bieri T."/>
            <person name="Ozersky P."/>
            <person name="McLellan M."/>
            <person name="Harkins C.R."/>
            <person name="Wang C."/>
            <person name="Nguyen C."/>
            <person name="Berghoff A."/>
            <person name="Elliott G."/>
            <person name="Kohlberg S."/>
            <person name="Strong C."/>
            <person name="Du F."/>
            <person name="Carter J."/>
            <person name="Kremizki C."/>
            <person name="Layman D."/>
            <person name="Leonard S."/>
            <person name="Sun H."/>
            <person name="Fulton L."/>
            <person name="Nash W."/>
            <person name="Miner T."/>
            <person name="Minx P."/>
            <person name="Delehaunty K."/>
            <person name="Fronick C."/>
            <person name="Magrini V."/>
            <person name="Nhan M."/>
            <person name="Warren W."/>
            <person name="Florea L."/>
            <person name="Spieth J."/>
            <person name="Wilson R.K."/>
        </authorList>
    </citation>
    <scope>NUCLEOTIDE SEQUENCE [LARGE SCALE GENOMIC DNA]</scope>
    <source>
        <strain>ATCC 9150 / SARB42</strain>
    </source>
</reference>